<name>RS20_ACIBY</name>
<gene>
    <name evidence="1" type="primary">rpsT</name>
    <name type="ordered locus">ABAYE2035</name>
</gene>
<sequence length="88" mass="9699">MANSAQAKKRARQNVKARKHNASLRSMVRTYIKRTLSAIAGGDYAVATEAYKKAVPVIDRMADKGIIHKNKAARHKSRLNAQVKALAN</sequence>
<keyword id="KW-0687">Ribonucleoprotein</keyword>
<keyword id="KW-0689">Ribosomal protein</keyword>
<keyword id="KW-0694">RNA-binding</keyword>
<keyword id="KW-0699">rRNA-binding</keyword>
<comment type="function">
    <text evidence="1">Binds directly to 16S ribosomal RNA.</text>
</comment>
<comment type="similarity">
    <text evidence="1">Belongs to the bacterial ribosomal protein bS20 family.</text>
</comment>
<evidence type="ECO:0000255" key="1">
    <source>
        <dbReference type="HAMAP-Rule" id="MF_00500"/>
    </source>
</evidence>
<evidence type="ECO:0000256" key="2">
    <source>
        <dbReference type="SAM" id="MobiDB-lite"/>
    </source>
</evidence>
<evidence type="ECO:0000305" key="3"/>
<reference key="1">
    <citation type="journal article" date="2008" name="PLoS ONE">
        <title>Comparative analysis of Acinetobacters: three genomes for three lifestyles.</title>
        <authorList>
            <person name="Vallenet D."/>
            <person name="Nordmann P."/>
            <person name="Barbe V."/>
            <person name="Poirel L."/>
            <person name="Mangenot S."/>
            <person name="Bataille E."/>
            <person name="Dossat C."/>
            <person name="Gas S."/>
            <person name="Kreimeyer A."/>
            <person name="Lenoble P."/>
            <person name="Oztas S."/>
            <person name="Poulain J."/>
            <person name="Segurens B."/>
            <person name="Robert C."/>
            <person name="Abergel C."/>
            <person name="Claverie J.-M."/>
            <person name="Raoult D."/>
            <person name="Medigue C."/>
            <person name="Weissenbach J."/>
            <person name="Cruveiller S."/>
        </authorList>
    </citation>
    <scope>NUCLEOTIDE SEQUENCE [LARGE SCALE GENOMIC DNA]</scope>
    <source>
        <strain>AYE</strain>
    </source>
</reference>
<feature type="chain" id="PRO_1000126386" description="Small ribosomal subunit protein bS20">
    <location>
        <begin position="1"/>
        <end position="88"/>
    </location>
</feature>
<feature type="region of interest" description="Disordered" evidence="2">
    <location>
        <begin position="1"/>
        <end position="21"/>
    </location>
</feature>
<feature type="compositionally biased region" description="Basic residues" evidence="2">
    <location>
        <begin position="7"/>
        <end position="21"/>
    </location>
</feature>
<protein>
    <recommendedName>
        <fullName evidence="1">Small ribosomal subunit protein bS20</fullName>
    </recommendedName>
    <alternativeName>
        <fullName evidence="3">30S ribosomal protein S20</fullName>
    </alternativeName>
</protein>
<organism>
    <name type="scientific">Acinetobacter baumannii (strain AYE)</name>
    <dbReference type="NCBI Taxonomy" id="509173"/>
    <lineage>
        <taxon>Bacteria</taxon>
        <taxon>Pseudomonadati</taxon>
        <taxon>Pseudomonadota</taxon>
        <taxon>Gammaproteobacteria</taxon>
        <taxon>Moraxellales</taxon>
        <taxon>Moraxellaceae</taxon>
        <taxon>Acinetobacter</taxon>
        <taxon>Acinetobacter calcoaceticus/baumannii complex</taxon>
    </lineage>
</organism>
<accession>B0VD42</accession>
<proteinExistence type="inferred from homology"/>
<dbReference type="EMBL" id="CU459141">
    <property type="protein sequence ID" value="CAM86912.1"/>
    <property type="molecule type" value="Genomic_DNA"/>
</dbReference>
<dbReference type="RefSeq" id="WP_000013652.1">
    <property type="nucleotide sequence ID" value="NZ_JBDGFB010000001.1"/>
</dbReference>
<dbReference type="SMR" id="B0VD42"/>
<dbReference type="EnsemblBacteria" id="CAM86912">
    <property type="protein sequence ID" value="CAM86912"/>
    <property type="gene ID" value="ABAYE2035"/>
</dbReference>
<dbReference type="GeneID" id="92893827"/>
<dbReference type="KEGG" id="aby:ABAYE2035"/>
<dbReference type="HOGENOM" id="CLU_160655_4_0_6"/>
<dbReference type="GO" id="GO:0005829">
    <property type="term" value="C:cytosol"/>
    <property type="evidence" value="ECO:0007669"/>
    <property type="project" value="TreeGrafter"/>
</dbReference>
<dbReference type="GO" id="GO:0015935">
    <property type="term" value="C:small ribosomal subunit"/>
    <property type="evidence" value="ECO:0007669"/>
    <property type="project" value="TreeGrafter"/>
</dbReference>
<dbReference type="GO" id="GO:0070181">
    <property type="term" value="F:small ribosomal subunit rRNA binding"/>
    <property type="evidence" value="ECO:0007669"/>
    <property type="project" value="TreeGrafter"/>
</dbReference>
<dbReference type="GO" id="GO:0003735">
    <property type="term" value="F:structural constituent of ribosome"/>
    <property type="evidence" value="ECO:0007669"/>
    <property type="project" value="InterPro"/>
</dbReference>
<dbReference type="GO" id="GO:0006412">
    <property type="term" value="P:translation"/>
    <property type="evidence" value="ECO:0007669"/>
    <property type="project" value="UniProtKB-UniRule"/>
</dbReference>
<dbReference type="FunFam" id="1.20.58.110:FF:000001">
    <property type="entry name" value="30S ribosomal protein S20"/>
    <property type="match status" value="1"/>
</dbReference>
<dbReference type="Gene3D" id="1.20.58.110">
    <property type="entry name" value="Ribosomal protein S20"/>
    <property type="match status" value="1"/>
</dbReference>
<dbReference type="HAMAP" id="MF_00500">
    <property type="entry name" value="Ribosomal_bS20"/>
    <property type="match status" value="1"/>
</dbReference>
<dbReference type="InterPro" id="IPR002583">
    <property type="entry name" value="Ribosomal_bS20"/>
</dbReference>
<dbReference type="InterPro" id="IPR036510">
    <property type="entry name" value="Ribosomal_bS20_sf"/>
</dbReference>
<dbReference type="NCBIfam" id="TIGR00029">
    <property type="entry name" value="S20"/>
    <property type="match status" value="1"/>
</dbReference>
<dbReference type="PANTHER" id="PTHR33398">
    <property type="entry name" value="30S RIBOSOMAL PROTEIN S20"/>
    <property type="match status" value="1"/>
</dbReference>
<dbReference type="PANTHER" id="PTHR33398:SF1">
    <property type="entry name" value="SMALL RIBOSOMAL SUBUNIT PROTEIN BS20C"/>
    <property type="match status" value="1"/>
</dbReference>
<dbReference type="Pfam" id="PF01649">
    <property type="entry name" value="Ribosomal_S20p"/>
    <property type="match status" value="1"/>
</dbReference>
<dbReference type="SUPFAM" id="SSF46992">
    <property type="entry name" value="Ribosomal protein S20"/>
    <property type="match status" value="1"/>
</dbReference>